<sequence>MTGITLVQGDITRQSADAIVNAANSSLLGGGGVDGAIHRRGGPAILAECRRLRAGHLGKGLPTGRAVATTAGDLDARWVIHTVGPVWSATEDRSGLLASCYRESLRTADELGARTVAFPAISTGVYRWPMDDAARIAVETVATTKTSVTEIRFVLFDARAYEAFAARLG</sequence>
<name>Y6450_STRCO</name>
<keyword id="KW-1185">Reference proteome</keyword>
<dbReference type="EMBL" id="AL939127">
    <property type="protein sequence ID" value="CAA22759.1"/>
    <property type="molecule type" value="Genomic_DNA"/>
</dbReference>
<dbReference type="PIR" id="T35937">
    <property type="entry name" value="T35937"/>
</dbReference>
<dbReference type="RefSeq" id="NP_630535.1">
    <property type="nucleotide sequence ID" value="NC_003888.3"/>
</dbReference>
<dbReference type="RefSeq" id="WP_011030929.1">
    <property type="nucleotide sequence ID" value="NZ_VNID01000002.1"/>
</dbReference>
<dbReference type="SMR" id="Q9ZBG3"/>
<dbReference type="STRING" id="100226.gene:17764107"/>
<dbReference type="PaxDb" id="100226-SCO6450"/>
<dbReference type="KEGG" id="sco:SCO6450"/>
<dbReference type="PATRIC" id="fig|100226.15.peg.6550"/>
<dbReference type="eggNOG" id="COG2110">
    <property type="taxonomic scope" value="Bacteria"/>
</dbReference>
<dbReference type="HOGENOM" id="CLU_046550_5_1_11"/>
<dbReference type="InParanoid" id="Q9ZBG3"/>
<dbReference type="OrthoDB" id="6194521at2"/>
<dbReference type="PhylomeDB" id="Q9ZBG3"/>
<dbReference type="Proteomes" id="UP000001973">
    <property type="component" value="Chromosome"/>
</dbReference>
<dbReference type="CDD" id="cd02908">
    <property type="entry name" value="Macro_OAADPr_deacetylase"/>
    <property type="match status" value="1"/>
</dbReference>
<dbReference type="Gene3D" id="3.40.220.10">
    <property type="entry name" value="Leucine Aminopeptidase, subunit E, domain 1"/>
    <property type="match status" value="1"/>
</dbReference>
<dbReference type="InterPro" id="IPR002589">
    <property type="entry name" value="Macro_dom"/>
</dbReference>
<dbReference type="InterPro" id="IPR043472">
    <property type="entry name" value="Macro_dom-like"/>
</dbReference>
<dbReference type="NCBIfam" id="NF001664">
    <property type="entry name" value="PRK00431.1-6"/>
    <property type="match status" value="1"/>
</dbReference>
<dbReference type="PANTHER" id="PTHR11106">
    <property type="entry name" value="GANGLIOSIDE INDUCED DIFFERENTIATION ASSOCIATED PROTEIN 2-RELATED"/>
    <property type="match status" value="1"/>
</dbReference>
<dbReference type="PANTHER" id="PTHR11106:SF27">
    <property type="entry name" value="MACRO DOMAIN-CONTAINING PROTEIN"/>
    <property type="match status" value="1"/>
</dbReference>
<dbReference type="Pfam" id="PF01661">
    <property type="entry name" value="Macro"/>
    <property type="match status" value="1"/>
</dbReference>
<dbReference type="SMART" id="SM00506">
    <property type="entry name" value="A1pp"/>
    <property type="match status" value="1"/>
</dbReference>
<dbReference type="SUPFAM" id="SSF52949">
    <property type="entry name" value="Macro domain-like"/>
    <property type="match status" value="1"/>
</dbReference>
<dbReference type="PROSITE" id="PS51154">
    <property type="entry name" value="MACRO"/>
    <property type="match status" value="1"/>
</dbReference>
<reference key="1">
    <citation type="journal article" date="2002" name="Nature">
        <title>Complete genome sequence of the model actinomycete Streptomyces coelicolor A3(2).</title>
        <authorList>
            <person name="Bentley S.D."/>
            <person name="Chater K.F."/>
            <person name="Cerdeno-Tarraga A.-M."/>
            <person name="Challis G.L."/>
            <person name="Thomson N.R."/>
            <person name="James K.D."/>
            <person name="Harris D.E."/>
            <person name="Quail M.A."/>
            <person name="Kieser H."/>
            <person name="Harper D."/>
            <person name="Bateman A."/>
            <person name="Brown S."/>
            <person name="Chandra G."/>
            <person name="Chen C.W."/>
            <person name="Collins M."/>
            <person name="Cronin A."/>
            <person name="Fraser A."/>
            <person name="Goble A."/>
            <person name="Hidalgo J."/>
            <person name="Hornsby T."/>
            <person name="Howarth S."/>
            <person name="Huang C.-H."/>
            <person name="Kieser T."/>
            <person name="Larke L."/>
            <person name="Murphy L.D."/>
            <person name="Oliver K."/>
            <person name="O'Neil S."/>
            <person name="Rabbinowitsch E."/>
            <person name="Rajandream M.A."/>
            <person name="Rutherford K.M."/>
            <person name="Rutter S."/>
            <person name="Seeger K."/>
            <person name="Saunders D."/>
            <person name="Sharp S."/>
            <person name="Squares R."/>
            <person name="Squares S."/>
            <person name="Taylor K."/>
            <person name="Warren T."/>
            <person name="Wietzorrek A."/>
            <person name="Woodward J.R."/>
            <person name="Barrell B.G."/>
            <person name="Parkhill J."/>
            <person name="Hopwood D.A."/>
        </authorList>
    </citation>
    <scope>NUCLEOTIDE SEQUENCE [LARGE SCALE GENOMIC DNA]</scope>
    <source>
        <strain>ATCC BAA-471 / A3(2) / M145</strain>
    </source>
</reference>
<evidence type="ECO:0000255" key="1">
    <source>
        <dbReference type="PROSITE-ProRule" id="PRU00490"/>
    </source>
</evidence>
<evidence type="ECO:0000305" key="2"/>
<comment type="similarity">
    <text evidence="2">Belongs to the MacroD-type family.</text>
</comment>
<accession>Q9ZBG3</accession>
<protein>
    <recommendedName>
        <fullName>Macro domain-containing protein SCO6450</fullName>
    </recommendedName>
</protein>
<feature type="chain" id="PRO_0000089214" description="Macro domain-containing protein SCO6450">
    <location>
        <begin position="1"/>
        <end position="169"/>
    </location>
</feature>
<feature type="domain" description="Macro" evidence="1">
    <location>
        <begin position="1"/>
        <end position="169"/>
    </location>
</feature>
<organism>
    <name type="scientific">Streptomyces coelicolor (strain ATCC BAA-471 / A3(2) / M145)</name>
    <dbReference type="NCBI Taxonomy" id="100226"/>
    <lineage>
        <taxon>Bacteria</taxon>
        <taxon>Bacillati</taxon>
        <taxon>Actinomycetota</taxon>
        <taxon>Actinomycetes</taxon>
        <taxon>Kitasatosporales</taxon>
        <taxon>Streptomycetaceae</taxon>
        <taxon>Streptomyces</taxon>
        <taxon>Streptomyces albidoflavus group</taxon>
    </lineage>
</organism>
<proteinExistence type="inferred from homology"/>
<gene>
    <name type="ordered locus">SCO6450</name>
    <name type="ORF">SC9B5.17</name>
</gene>